<keyword id="KW-0238">DNA-binding</keyword>
<keyword id="KW-0539">Nucleus</keyword>
<keyword id="KW-1185">Reference proteome</keyword>
<keyword id="KW-0804">Transcription</keyword>
<keyword id="KW-0805">Transcription regulation</keyword>
<name>RFX4_XENLA</name>
<sequence length="730" mass="82502">MHCGLLEQPDMDSTESWIERCLSESENKCYSSHTSLGNISNDETDEEKENRASKPHSTPATLQWLGENYEIAEGVCIPRSALYMHYLDFCEKNDTQPVNAASFGKIIRQQFPQLTTRRLGTRGQSKYHYYGIAVKESSQYYDVMYSKKGAAWVNETGKKEVTKQTVAYSPRSKLGTLLPEFPNVKDLNLPSSLPEEKISTFIMMYRTHCQRILDTVIRANFDEVQSFLLHFWQGMPPHMLPVLGSSTVVNIVGVCDSILYKAISGVLMPTVLQALPDSLTQVIRKFAKQLDEWLKVALHDLPENLRNIKFELSKRFSQILRRQTSLNHLCQASRTVIHSADITFQMLEDWRNVDLNSITKQSLYTIEDSREEHRKLIIQLYQEFDHLLEDQSPIESYIDWLDSMVDRCVVKVASKKQGSLKKVAQQFLLIWSCFGTRVIRDMTLHSAPSFGSFHLIHLMFDDYVLYLLESLHCQERANELMRAMKGEAHGEIREERVLGEPAISTPSPVPFSPAASSSSVEIPSATSPVSNQSPEVGVVAATTGTMQSYTWSLTYTVTTAANGPGENGQQVPCMRSPHMTPSVTHRIPVYPHREDGYTGSYNYGTYSNQGHHPIASQYTSLPHESGLSGPLYTAYHRSSSQYPFNSQTRMEPCLMSGATRLHPSQVAPRWPDVTSTNTCFTSPTMHSARYANTSDMYTSLAPRRNSDYEHMQHFPGFAYINGEASAGWAK</sequence>
<proteinExistence type="evidence at transcript level"/>
<gene>
    <name evidence="7" type="primary">rfx4.L</name>
</gene>
<organism evidence="6">
    <name type="scientific">Xenopus laevis</name>
    <name type="common">African clawed frog</name>
    <dbReference type="NCBI Taxonomy" id="8355"/>
    <lineage>
        <taxon>Eukaryota</taxon>
        <taxon>Metazoa</taxon>
        <taxon>Chordata</taxon>
        <taxon>Craniata</taxon>
        <taxon>Vertebrata</taxon>
        <taxon>Euteleostomi</taxon>
        <taxon>Amphibia</taxon>
        <taxon>Batrachia</taxon>
        <taxon>Anura</taxon>
        <taxon>Pipoidea</taxon>
        <taxon>Pipidae</taxon>
        <taxon>Xenopodinae</taxon>
        <taxon>Xenopus</taxon>
        <taxon>Xenopus</taxon>
    </lineage>
</organism>
<reference evidence="5" key="1">
    <citation type="journal article" date="2014" name="Mech. Dev.">
        <title>RFX7 is required for the formation of cilia in the neural tube.</title>
        <authorList>
            <person name="Manojlovic Z."/>
            <person name="Earwood R."/>
            <person name="Kato A."/>
            <person name="Stefanovic B."/>
            <person name="Kato Y."/>
        </authorList>
    </citation>
    <scope>NUCLEOTIDE SEQUENCE [MRNA] OF 1-121</scope>
    <scope>FUNCTION</scope>
    <scope>DEVELOPMENTAL STAGE</scope>
    <scope>DISRUPTION PHENOTYPE</scope>
</reference>
<dbReference type="EMBL" id="KF543240">
    <property type="protein sequence ID" value="AID66493.1"/>
    <property type="molecule type" value="mRNA"/>
</dbReference>
<dbReference type="RefSeq" id="XP_018107444.1">
    <property type="nucleotide sequence ID" value="XM_018251955.2"/>
</dbReference>
<dbReference type="SMR" id="A0A1L8GWK2"/>
<dbReference type="STRING" id="8355.A0A1L8GWK2"/>
<dbReference type="PaxDb" id="8355-A0A1L8GWK2"/>
<dbReference type="GeneID" id="108710798"/>
<dbReference type="KEGG" id="xla:108710798"/>
<dbReference type="AGR" id="Xenbase:XB-GENE-17341479"/>
<dbReference type="CTD" id="108710798"/>
<dbReference type="Xenbase" id="XB-GENE-17341479">
    <property type="gene designation" value="rfx4.L"/>
</dbReference>
<dbReference type="OMA" id="YAHREEH"/>
<dbReference type="OrthoDB" id="10056949at2759"/>
<dbReference type="Proteomes" id="UP000186698">
    <property type="component" value="Chromosome 3L"/>
</dbReference>
<dbReference type="Bgee" id="108710798">
    <property type="expression patterns" value="Expressed in neurula embryo and 1 other cell type or tissue"/>
</dbReference>
<dbReference type="GO" id="GO:0005634">
    <property type="term" value="C:nucleus"/>
    <property type="evidence" value="ECO:0007669"/>
    <property type="project" value="UniProtKB-SubCell"/>
</dbReference>
<dbReference type="GO" id="GO:0000981">
    <property type="term" value="F:DNA-binding transcription factor activity, RNA polymerase II-specific"/>
    <property type="evidence" value="ECO:0000318"/>
    <property type="project" value="GO_Central"/>
</dbReference>
<dbReference type="GO" id="GO:0000978">
    <property type="term" value="F:RNA polymerase II cis-regulatory region sequence-specific DNA binding"/>
    <property type="evidence" value="ECO:0000318"/>
    <property type="project" value="GO_Central"/>
</dbReference>
<dbReference type="GO" id="GO:0006357">
    <property type="term" value="P:regulation of transcription by RNA polymerase II"/>
    <property type="evidence" value="ECO:0000318"/>
    <property type="project" value="GO_Central"/>
</dbReference>
<dbReference type="FunFam" id="1.10.10.10:FF:000178">
    <property type="entry name" value="Putative Transcription factor RFX4"/>
    <property type="match status" value="1"/>
</dbReference>
<dbReference type="Gene3D" id="1.10.10.10">
    <property type="entry name" value="Winged helix-like DNA-binding domain superfamily/Winged helix DNA-binding domain"/>
    <property type="match status" value="1"/>
</dbReference>
<dbReference type="InterPro" id="IPR003150">
    <property type="entry name" value="DNA-bd_RFX"/>
</dbReference>
<dbReference type="InterPro" id="IPR039779">
    <property type="entry name" value="RFX-like"/>
</dbReference>
<dbReference type="InterPro" id="IPR036388">
    <property type="entry name" value="WH-like_DNA-bd_sf"/>
</dbReference>
<dbReference type="InterPro" id="IPR036390">
    <property type="entry name" value="WH_DNA-bd_sf"/>
</dbReference>
<dbReference type="PANTHER" id="PTHR12619">
    <property type="entry name" value="RFX TRANSCRIPTION FACTOR FAMILY"/>
    <property type="match status" value="1"/>
</dbReference>
<dbReference type="PANTHER" id="PTHR12619:SF5">
    <property type="entry name" value="TRANSCRIPTION FACTOR RFX4"/>
    <property type="match status" value="1"/>
</dbReference>
<dbReference type="Pfam" id="PF25340">
    <property type="entry name" value="BCD_RFX"/>
    <property type="match status" value="1"/>
</dbReference>
<dbReference type="Pfam" id="PF02257">
    <property type="entry name" value="RFX_DNA_binding"/>
    <property type="match status" value="1"/>
</dbReference>
<dbReference type="SUPFAM" id="SSF46785">
    <property type="entry name" value="Winged helix' DNA-binding domain"/>
    <property type="match status" value="1"/>
</dbReference>
<dbReference type="PROSITE" id="PS51526">
    <property type="entry name" value="RFX_DBD"/>
    <property type="match status" value="1"/>
</dbReference>
<protein>
    <recommendedName>
        <fullName evidence="4">Regulatory factor X 4</fullName>
    </recommendedName>
</protein>
<evidence type="ECO:0000255" key="1">
    <source>
        <dbReference type="PROSITE-ProRule" id="PRU00858"/>
    </source>
</evidence>
<evidence type="ECO:0000256" key="2">
    <source>
        <dbReference type="SAM" id="MobiDB-lite"/>
    </source>
</evidence>
<evidence type="ECO:0000269" key="3">
    <source>
    </source>
</evidence>
<evidence type="ECO:0000305" key="4"/>
<evidence type="ECO:0000312" key="5">
    <source>
        <dbReference type="EMBL" id="AID66493.1"/>
    </source>
</evidence>
<evidence type="ECO:0000312" key="6">
    <source>
        <dbReference type="Proteomes" id="UP000186698"/>
    </source>
</evidence>
<evidence type="ECO:0000312" key="7">
    <source>
        <dbReference type="Xenbase" id="XB-GENE-17341479"/>
    </source>
</evidence>
<accession>A0A1L8GWK2</accession>
<accession>A0A068FKR0</accession>
<feature type="chain" id="PRO_0000459394" description="Regulatory factor X 4">
    <location>
        <begin position="1"/>
        <end position="730"/>
    </location>
</feature>
<feature type="DNA-binding region" description="RFX-type winged-helix" evidence="1">
    <location>
        <begin position="61"/>
        <end position="136"/>
    </location>
</feature>
<feature type="region of interest" description="Disordered" evidence="2">
    <location>
        <begin position="30"/>
        <end position="59"/>
    </location>
</feature>
<feature type="region of interest" description="Disordered" evidence="2">
    <location>
        <begin position="500"/>
        <end position="532"/>
    </location>
</feature>
<feature type="compositionally biased region" description="Polar residues" evidence="2">
    <location>
        <begin position="30"/>
        <end position="41"/>
    </location>
</feature>
<feature type="compositionally biased region" description="Low complexity" evidence="2">
    <location>
        <begin position="512"/>
        <end position="528"/>
    </location>
</feature>
<comment type="function">
    <text evidence="3">Required for neural tube ciliogenesis during embryogenesis.</text>
</comment>
<comment type="subcellular location">
    <subcellularLocation>
        <location evidence="1">Nucleus</location>
    </subcellularLocation>
</comment>
<comment type="developmental stage">
    <text evidence="3">Expressed in the nervous system from stage 14 to stage 30.</text>
</comment>
<comment type="disruption phenotype">
    <text evidence="3">Morpholino-mediated knockdown in embryos results in the failure of neural folds closure at stage 18 (PubMed:24530844). Impaired ciliogenesis in the neural tube (PubMed:24530844).</text>
</comment>
<comment type="similarity">
    <text evidence="4">Belongs to the RFX family.</text>
</comment>